<gene>
    <name evidence="1" type="primary">ybeY</name>
    <name type="ordered locus">KPK_3889</name>
</gene>
<name>YBEY_KLEP3</name>
<keyword id="KW-0963">Cytoplasm</keyword>
<keyword id="KW-0255">Endonuclease</keyword>
<keyword id="KW-0378">Hydrolase</keyword>
<keyword id="KW-0479">Metal-binding</keyword>
<keyword id="KW-0540">Nuclease</keyword>
<keyword id="KW-0690">Ribosome biogenesis</keyword>
<keyword id="KW-0698">rRNA processing</keyword>
<keyword id="KW-0862">Zinc</keyword>
<accession>B5XZQ2</accession>
<dbReference type="EC" id="3.1.-.-" evidence="1"/>
<dbReference type="EMBL" id="CP000964">
    <property type="protein sequence ID" value="ACI11681.1"/>
    <property type="molecule type" value="Genomic_DNA"/>
</dbReference>
<dbReference type="SMR" id="B5XZQ2"/>
<dbReference type="KEGG" id="kpe:KPK_3889"/>
<dbReference type="HOGENOM" id="CLU_106710_0_1_6"/>
<dbReference type="Proteomes" id="UP000001734">
    <property type="component" value="Chromosome"/>
</dbReference>
<dbReference type="GO" id="GO:0005737">
    <property type="term" value="C:cytoplasm"/>
    <property type="evidence" value="ECO:0007669"/>
    <property type="project" value="UniProtKB-SubCell"/>
</dbReference>
<dbReference type="GO" id="GO:0004222">
    <property type="term" value="F:metalloendopeptidase activity"/>
    <property type="evidence" value="ECO:0007669"/>
    <property type="project" value="InterPro"/>
</dbReference>
<dbReference type="GO" id="GO:0004521">
    <property type="term" value="F:RNA endonuclease activity"/>
    <property type="evidence" value="ECO:0007669"/>
    <property type="project" value="UniProtKB-UniRule"/>
</dbReference>
<dbReference type="GO" id="GO:0008270">
    <property type="term" value="F:zinc ion binding"/>
    <property type="evidence" value="ECO:0007669"/>
    <property type="project" value="UniProtKB-UniRule"/>
</dbReference>
<dbReference type="GO" id="GO:0006364">
    <property type="term" value="P:rRNA processing"/>
    <property type="evidence" value="ECO:0007669"/>
    <property type="project" value="UniProtKB-UniRule"/>
</dbReference>
<dbReference type="Gene3D" id="3.40.390.30">
    <property type="entry name" value="Metalloproteases ('zincins'), catalytic domain"/>
    <property type="match status" value="1"/>
</dbReference>
<dbReference type="HAMAP" id="MF_00009">
    <property type="entry name" value="Endoribonucl_YbeY"/>
    <property type="match status" value="1"/>
</dbReference>
<dbReference type="InterPro" id="IPR023091">
    <property type="entry name" value="MetalPrtase_cat_dom_sf_prd"/>
</dbReference>
<dbReference type="InterPro" id="IPR002036">
    <property type="entry name" value="YbeY"/>
</dbReference>
<dbReference type="InterPro" id="IPR020549">
    <property type="entry name" value="YbeY_CS"/>
</dbReference>
<dbReference type="NCBIfam" id="TIGR00043">
    <property type="entry name" value="rRNA maturation RNase YbeY"/>
    <property type="match status" value="1"/>
</dbReference>
<dbReference type="PANTHER" id="PTHR46986">
    <property type="entry name" value="ENDORIBONUCLEASE YBEY, CHLOROPLASTIC"/>
    <property type="match status" value="1"/>
</dbReference>
<dbReference type="PANTHER" id="PTHR46986:SF1">
    <property type="entry name" value="ENDORIBONUCLEASE YBEY, CHLOROPLASTIC"/>
    <property type="match status" value="1"/>
</dbReference>
<dbReference type="Pfam" id="PF02130">
    <property type="entry name" value="YbeY"/>
    <property type="match status" value="1"/>
</dbReference>
<dbReference type="SUPFAM" id="SSF55486">
    <property type="entry name" value="Metalloproteases ('zincins'), catalytic domain"/>
    <property type="match status" value="1"/>
</dbReference>
<dbReference type="PROSITE" id="PS01306">
    <property type="entry name" value="UPF0054"/>
    <property type="match status" value="1"/>
</dbReference>
<organism>
    <name type="scientific">Klebsiella pneumoniae (strain 342)</name>
    <dbReference type="NCBI Taxonomy" id="507522"/>
    <lineage>
        <taxon>Bacteria</taxon>
        <taxon>Pseudomonadati</taxon>
        <taxon>Pseudomonadota</taxon>
        <taxon>Gammaproteobacteria</taxon>
        <taxon>Enterobacterales</taxon>
        <taxon>Enterobacteriaceae</taxon>
        <taxon>Klebsiella/Raoultella group</taxon>
        <taxon>Klebsiella</taxon>
        <taxon>Klebsiella pneumoniae complex</taxon>
    </lineage>
</organism>
<evidence type="ECO:0000255" key="1">
    <source>
        <dbReference type="HAMAP-Rule" id="MF_00009"/>
    </source>
</evidence>
<reference key="1">
    <citation type="journal article" date="2008" name="PLoS Genet.">
        <title>Complete genome sequence of the N2-fixing broad host range endophyte Klebsiella pneumoniae 342 and virulence predictions verified in mice.</title>
        <authorList>
            <person name="Fouts D.E."/>
            <person name="Tyler H.L."/>
            <person name="DeBoy R.T."/>
            <person name="Daugherty S."/>
            <person name="Ren Q."/>
            <person name="Badger J.H."/>
            <person name="Durkin A.S."/>
            <person name="Huot H."/>
            <person name="Shrivastava S."/>
            <person name="Kothari S."/>
            <person name="Dodson R.J."/>
            <person name="Mohamoud Y."/>
            <person name="Khouri H."/>
            <person name="Roesch L.F.W."/>
            <person name="Krogfelt K.A."/>
            <person name="Struve C."/>
            <person name="Triplett E.W."/>
            <person name="Methe B.A."/>
        </authorList>
    </citation>
    <scope>NUCLEOTIDE SEQUENCE [LARGE SCALE GENOMIC DNA]</scope>
    <source>
        <strain>342</strain>
    </source>
</reference>
<proteinExistence type="inferred from homology"/>
<feature type="chain" id="PRO_1000089185" description="Endoribonuclease YbeY">
    <location>
        <begin position="1"/>
        <end position="157"/>
    </location>
</feature>
<feature type="binding site" evidence="1">
    <location>
        <position position="114"/>
    </location>
    <ligand>
        <name>Zn(2+)</name>
        <dbReference type="ChEBI" id="CHEBI:29105"/>
        <note>catalytic</note>
    </ligand>
</feature>
<feature type="binding site" evidence="1">
    <location>
        <position position="118"/>
    </location>
    <ligand>
        <name>Zn(2+)</name>
        <dbReference type="ChEBI" id="CHEBI:29105"/>
        <note>catalytic</note>
    </ligand>
</feature>
<feature type="binding site" evidence="1">
    <location>
        <position position="124"/>
    </location>
    <ligand>
        <name>Zn(2+)</name>
        <dbReference type="ChEBI" id="CHEBI:29105"/>
        <note>catalytic</note>
    </ligand>
</feature>
<sequence>MSQVILDLQLACEETSGLPDEALFQRWVDAVIPPFQEESELTIRLVDVAESHELNLTYRGKDKPTNVLSFPFEAPPGIEMPLLGDLIICRQVVEQEASEQGKPLEAHWAHMVVHGSLHLLGYDHIEDDEAEEMEGLETEIMLALGYEDPYISEKIAE</sequence>
<comment type="function">
    <text evidence="1">Single strand-specific metallo-endoribonuclease involved in late-stage 70S ribosome quality control and in maturation of the 3' terminus of the 16S rRNA.</text>
</comment>
<comment type="cofactor">
    <cofactor evidence="1">
        <name>Zn(2+)</name>
        <dbReference type="ChEBI" id="CHEBI:29105"/>
    </cofactor>
    <text evidence="1">Binds 1 zinc ion.</text>
</comment>
<comment type="subcellular location">
    <subcellularLocation>
        <location evidence="1">Cytoplasm</location>
    </subcellularLocation>
</comment>
<comment type="similarity">
    <text evidence="1">Belongs to the endoribonuclease YbeY family.</text>
</comment>
<protein>
    <recommendedName>
        <fullName evidence="1">Endoribonuclease YbeY</fullName>
        <ecNumber evidence="1">3.1.-.-</ecNumber>
    </recommendedName>
</protein>